<evidence type="ECO:0000255" key="1"/>
<evidence type="ECO:0000255" key="2">
    <source>
        <dbReference type="PROSITE-ProRule" id="PRU00298"/>
    </source>
</evidence>
<evidence type="ECO:0000255" key="3">
    <source>
        <dbReference type="PROSITE-ProRule" id="PRU01005"/>
    </source>
</evidence>
<evidence type="ECO:0000269" key="4">
    <source>
    </source>
</evidence>
<evidence type="ECO:0000269" key="5">
    <source>
    </source>
</evidence>
<evidence type="ECO:0000303" key="6">
    <source>
    </source>
</evidence>
<evidence type="ECO:0000305" key="7"/>
<evidence type="ECO:0000305" key="8">
    <source>
    </source>
</evidence>
<evidence type="ECO:0000312" key="9">
    <source>
        <dbReference type="WormBase" id="ZK430.8"/>
    </source>
</evidence>
<sequence length="724" mass="80829">MRRLHRNLSLLFLICILNEYRIESQTLSPPITDRFKCLTNGCCDHHEWCRFWASIGECNANKDWMTENCQLACGTCTAPAAPLLPVTTTASSFNGGGFVQTTTQSSGPTTTITIPPSSLTSVTSCERVKDSIAQASELMSISRLINPVEDNFGRNMLSIDDITRSVPTGCVPQLSDVGVDCRKSLCYHLMYRTLDGTCNNLEKPMQGAAFRRFNRHFPAQYDDGKGEPISSLNQSRPSAREANRVMLSSAQSVVHDKFNNMMMQWGQFMSHDMSKTTLQPSANCKTCDPVPSKCMPIPIGEKDPNLGFKSKQCLKVSRSAPICRVEPREQLNENTAYIDGSMIYGSSLKDLHKFRDGRTGFLRVTRFNNQNVLPFDQSKCANKDKCTASFTAGDIRANLFIGLSSLHIMFAREHNRIAQKLTELNPTWSGDRVFQEARKIVGAQIQNVLYKEYLPKLLGVSFDKVIGPYKGYDTNVDATIANEFTTSAFRFGHGMIEEFYKRVDLSGNNITHGGFFFGDGVFKSGKILFEGGVDPIIRGFMTTAVKRPHRMTPAITEKMFGSTDLGSLNIQRGRDHGIPSYNKMRQFCGLKSANTFDDFADMILDRNLRAGLARNYNTTNDVDFYVGSMLEDPVIGGLVGTTLSCAIGEQFKRARDGDRFYFENPGIFTRSQMEEIKKSSLSRIICDNADNFELVSQDAFLLPGSNLTPCSKIPKMDLSKWRAL</sequence>
<comment type="function">
    <text evidence="5">Plays an essential role in cuticle biogenesis. Required in combination with bli-3 for correct formation of cross-links in cuticle collagens.</text>
</comment>
<comment type="catalytic activity">
    <reaction evidence="5">
        <text>2 a phenolic donor + H2O2 = 2 a phenolic radical donor + 2 H2O</text>
        <dbReference type="Rhea" id="RHEA:56136"/>
        <dbReference type="ChEBI" id="CHEBI:15377"/>
        <dbReference type="ChEBI" id="CHEBI:16240"/>
        <dbReference type="ChEBI" id="CHEBI:139520"/>
        <dbReference type="ChEBI" id="CHEBI:139521"/>
        <dbReference type="EC" id="1.11.1.7"/>
    </reaction>
</comment>
<comment type="cofactor">
    <cofactor evidence="8">
        <name>heme b</name>
        <dbReference type="ChEBI" id="CHEBI:60344"/>
    </cofactor>
</comment>
<comment type="tissue specificity">
    <text evidence="5">Expressed in the hypodermal cells, specifically the head and seam/body.</text>
</comment>
<comment type="developmental stage">
    <text evidence="5">Expressed in all adult and larval stages. Expression is cyclical and coincides with each of the larval molts, peaking at 12, 18, 24, and 30 hours post-hatching.</text>
</comment>
<comment type="disruption phenotype">
    <text evidence="5">Gross morphological abnormalities causing larval arrest with associated molt defects and low levels of embryonic lethality. Cuticle function and integrity are also impaired.</text>
</comment>
<comment type="similarity">
    <text evidence="2">Belongs to the peroxidase family.</text>
</comment>
<gene>
    <name evidence="9" type="primary">mlt-7</name>
    <name type="ORF">ZK430.8</name>
</gene>
<organism>
    <name type="scientific">Caenorhabditis elegans</name>
    <dbReference type="NCBI Taxonomy" id="6239"/>
    <lineage>
        <taxon>Eukaryota</taxon>
        <taxon>Metazoa</taxon>
        <taxon>Ecdysozoa</taxon>
        <taxon>Nematoda</taxon>
        <taxon>Chromadorea</taxon>
        <taxon>Rhabditida</taxon>
        <taxon>Rhabditina</taxon>
        <taxon>Rhabditomorpha</taxon>
        <taxon>Rhabditoidea</taxon>
        <taxon>Rhabditidae</taxon>
        <taxon>Peloderinae</taxon>
        <taxon>Caenorhabditis</taxon>
    </lineage>
</organism>
<name>MLT7_CAEEL</name>
<feature type="signal peptide" evidence="1">
    <location>
        <begin position="1"/>
        <end position="24"/>
    </location>
</feature>
<feature type="propeptide" id="PRO_0000391682" evidence="1">
    <location>
        <begin position="25"/>
        <end position="178"/>
    </location>
</feature>
<feature type="chain" id="PRO_0000391683" description="Peroxidase mlt-7 light chain" evidence="1">
    <location>
        <begin position="179"/>
        <end position="281"/>
    </location>
</feature>
<feature type="chain" id="PRO_0000391684" description="Peroxidase mlt-7 heavy chain" evidence="1">
    <location>
        <begin position="282"/>
        <end position="724"/>
    </location>
</feature>
<feature type="domain" description="ShKT" evidence="3">
    <location>
        <begin position="42"/>
        <end position="76"/>
    </location>
</feature>
<feature type="active site" description="Proton acceptor" evidence="2">
    <location>
        <position position="271"/>
    </location>
</feature>
<feature type="binding site" evidence="2">
    <location>
        <position position="272"/>
    </location>
    <ligand>
        <name>Ca(2+)</name>
        <dbReference type="ChEBI" id="CHEBI:29108"/>
    </ligand>
</feature>
<feature type="binding site" evidence="2">
    <location>
        <position position="335"/>
    </location>
    <ligand>
        <name>Ca(2+)</name>
        <dbReference type="ChEBI" id="CHEBI:29108"/>
    </ligand>
</feature>
<feature type="binding site" evidence="2">
    <location>
        <position position="337"/>
    </location>
    <ligand>
        <name>Ca(2+)</name>
        <dbReference type="ChEBI" id="CHEBI:29108"/>
    </ligand>
</feature>
<feature type="binding site" evidence="2">
    <location>
        <position position="339"/>
    </location>
    <ligand>
        <name>Ca(2+)</name>
        <dbReference type="ChEBI" id="CHEBI:29108"/>
    </ligand>
</feature>
<feature type="binding site" evidence="2">
    <location>
        <position position="341"/>
    </location>
    <ligand>
        <name>Ca(2+)</name>
        <dbReference type="ChEBI" id="CHEBI:29108"/>
    </ligand>
</feature>
<feature type="binding site" description="axial binding residue" evidence="2">
    <location>
        <position position="493"/>
    </location>
    <ligand>
        <name>heme b</name>
        <dbReference type="ChEBI" id="CHEBI:60344"/>
    </ligand>
    <ligandPart>
        <name>Fe</name>
        <dbReference type="ChEBI" id="CHEBI:18248"/>
    </ligandPart>
</feature>
<feature type="site" description="Transition state stabilizer" evidence="2">
    <location>
        <position position="396"/>
    </location>
</feature>
<feature type="glycosylation site" description="N-linked (GlcNAc...) asparagine" evidence="1">
    <location>
        <position position="7"/>
    </location>
</feature>
<feature type="glycosylation site" description="N-linked (GlcNAc...) asparagine" evidence="1">
    <location>
        <position position="233"/>
    </location>
</feature>
<feature type="glycosylation site" description="N-linked (GlcNAc...) asparagine" evidence="4">
    <location>
        <position position="509"/>
    </location>
</feature>
<feature type="glycosylation site" description="N-linked (GlcNAc...) asparagine" evidence="1">
    <location>
        <position position="617"/>
    </location>
</feature>
<feature type="disulfide bond" evidence="1">
    <location>
        <begin position="181"/>
        <end position="198"/>
    </location>
</feature>
<feature type="disulfide bond" evidence="1">
    <location>
        <begin position="284"/>
        <end position="294"/>
    </location>
</feature>
<feature type="disulfide bond" evidence="1">
    <location>
        <begin position="588"/>
        <end position="645"/>
    </location>
</feature>
<feature type="disulfide bond" evidence="1">
    <location>
        <begin position="686"/>
        <end position="710"/>
    </location>
</feature>
<dbReference type="EC" id="1.11.1.7"/>
<dbReference type="EMBL" id="FO080155">
    <property type="protein sequence ID" value="CCD61675.1"/>
    <property type="molecule type" value="Genomic_DNA"/>
</dbReference>
<dbReference type="PIR" id="T27858">
    <property type="entry name" value="T27858"/>
</dbReference>
<dbReference type="RefSeq" id="NP_494777.1">
    <property type="nucleotide sequence ID" value="NM_062376.7"/>
</dbReference>
<dbReference type="SMR" id="Q23490"/>
<dbReference type="BioGRID" id="39131">
    <property type="interactions" value="13"/>
</dbReference>
<dbReference type="FunCoup" id="Q23490">
    <property type="interactions" value="18"/>
</dbReference>
<dbReference type="STRING" id="6239.ZK430.8.1"/>
<dbReference type="PeroxiBase" id="4141">
    <property type="entry name" value="CelPxd05"/>
</dbReference>
<dbReference type="GlyCosmos" id="Q23490">
    <property type="glycosylation" value="4 sites, No reported glycans"/>
</dbReference>
<dbReference type="iPTMnet" id="Q23490"/>
<dbReference type="PaxDb" id="6239-ZK430.8"/>
<dbReference type="PeptideAtlas" id="Q23490"/>
<dbReference type="EnsemblMetazoa" id="ZK430.8.1">
    <property type="protein sequence ID" value="ZK430.8.1"/>
    <property type="gene ID" value="WBGene00022743"/>
</dbReference>
<dbReference type="GeneID" id="173775"/>
<dbReference type="KEGG" id="cel:CELE_ZK430.8"/>
<dbReference type="UCSC" id="ZK430.8">
    <property type="organism name" value="c. elegans"/>
</dbReference>
<dbReference type="AGR" id="WB:WBGene00022743"/>
<dbReference type="CTD" id="173775"/>
<dbReference type="WormBase" id="ZK430.8">
    <property type="protein sequence ID" value="CE05084"/>
    <property type="gene ID" value="WBGene00022743"/>
    <property type="gene designation" value="mlt-7"/>
</dbReference>
<dbReference type="eggNOG" id="KOG2408">
    <property type="taxonomic scope" value="Eukaryota"/>
</dbReference>
<dbReference type="HOGENOM" id="CLU_006087_4_0_1"/>
<dbReference type="InParanoid" id="Q23490"/>
<dbReference type="OMA" id="CDNGDHF"/>
<dbReference type="OrthoDB" id="823504at2759"/>
<dbReference type="PhylomeDB" id="Q23490"/>
<dbReference type="PRO" id="PR:Q23490"/>
<dbReference type="Proteomes" id="UP000001940">
    <property type="component" value="Chromosome II"/>
</dbReference>
<dbReference type="Bgee" id="WBGene00022743">
    <property type="expression patterns" value="Expressed in larva and 3 other cell types or tissues"/>
</dbReference>
<dbReference type="GO" id="GO:0005615">
    <property type="term" value="C:extracellular space"/>
    <property type="evidence" value="ECO:0000318"/>
    <property type="project" value="GO_Central"/>
</dbReference>
<dbReference type="GO" id="GO:0020037">
    <property type="term" value="F:heme binding"/>
    <property type="evidence" value="ECO:0007669"/>
    <property type="project" value="InterPro"/>
</dbReference>
<dbReference type="GO" id="GO:0140825">
    <property type="term" value="F:lactoperoxidase activity"/>
    <property type="evidence" value="ECO:0007669"/>
    <property type="project" value="UniProtKB-EC"/>
</dbReference>
<dbReference type="GO" id="GO:0046872">
    <property type="term" value="F:metal ion binding"/>
    <property type="evidence" value="ECO:0007669"/>
    <property type="project" value="UniProtKB-KW"/>
</dbReference>
<dbReference type="GO" id="GO:0004601">
    <property type="term" value="F:peroxidase activity"/>
    <property type="evidence" value="ECO:0000314"/>
    <property type="project" value="WormBase"/>
</dbReference>
<dbReference type="GO" id="GO:0042338">
    <property type="term" value="P:cuticle development involved in collagen and cuticulin-based cuticle molting cycle"/>
    <property type="evidence" value="ECO:0000315"/>
    <property type="project" value="WormBase"/>
</dbReference>
<dbReference type="GO" id="GO:0002119">
    <property type="term" value="P:nematode larval development"/>
    <property type="evidence" value="ECO:0000315"/>
    <property type="project" value="WormBase"/>
</dbReference>
<dbReference type="GO" id="GO:0040032">
    <property type="term" value="P:post-embryonic body morphogenesis"/>
    <property type="evidence" value="ECO:0000315"/>
    <property type="project" value="WormBase"/>
</dbReference>
<dbReference type="GO" id="GO:0006979">
    <property type="term" value="P:response to oxidative stress"/>
    <property type="evidence" value="ECO:0007669"/>
    <property type="project" value="InterPro"/>
</dbReference>
<dbReference type="CDD" id="cd09823">
    <property type="entry name" value="peroxinectin_like"/>
    <property type="match status" value="1"/>
</dbReference>
<dbReference type="FunFam" id="1.10.640.10:FF:000007">
    <property type="entry name" value="Peroxidase mlt-7"/>
    <property type="match status" value="1"/>
</dbReference>
<dbReference type="Gene3D" id="1.10.640.10">
    <property type="entry name" value="Haem peroxidase domain superfamily, animal type"/>
    <property type="match status" value="1"/>
</dbReference>
<dbReference type="InterPro" id="IPR019791">
    <property type="entry name" value="Haem_peroxidase_animal"/>
</dbReference>
<dbReference type="InterPro" id="IPR010255">
    <property type="entry name" value="Haem_peroxidase_sf"/>
</dbReference>
<dbReference type="InterPro" id="IPR037120">
    <property type="entry name" value="Haem_peroxidase_sf_animal"/>
</dbReference>
<dbReference type="InterPro" id="IPR003582">
    <property type="entry name" value="ShKT_dom"/>
</dbReference>
<dbReference type="PANTHER" id="PTHR11475">
    <property type="entry name" value="OXIDASE/PEROXIDASE"/>
    <property type="match status" value="1"/>
</dbReference>
<dbReference type="PANTHER" id="PTHR11475:SF61">
    <property type="entry name" value="PEROXIDASE MLT-7"/>
    <property type="match status" value="1"/>
</dbReference>
<dbReference type="Pfam" id="PF03098">
    <property type="entry name" value="An_peroxidase"/>
    <property type="match status" value="1"/>
</dbReference>
<dbReference type="Pfam" id="PF01549">
    <property type="entry name" value="ShK"/>
    <property type="match status" value="1"/>
</dbReference>
<dbReference type="PRINTS" id="PR00457">
    <property type="entry name" value="ANPEROXIDASE"/>
</dbReference>
<dbReference type="SMART" id="SM00254">
    <property type="entry name" value="ShKT"/>
    <property type="match status" value="1"/>
</dbReference>
<dbReference type="SUPFAM" id="SSF48113">
    <property type="entry name" value="Heme-dependent peroxidases"/>
    <property type="match status" value="1"/>
</dbReference>
<dbReference type="PROSITE" id="PS50292">
    <property type="entry name" value="PEROXIDASE_3"/>
    <property type="match status" value="1"/>
</dbReference>
<dbReference type="PROSITE" id="PS51670">
    <property type="entry name" value="SHKT"/>
    <property type="match status" value="1"/>
</dbReference>
<accession>Q23490</accession>
<protein>
    <recommendedName>
        <fullName evidence="6">Peroxidase mlt-7</fullName>
        <ecNumber>1.11.1.7</ecNumber>
    </recommendedName>
    <alternativeName>
        <fullName evidence="6">Molting defective protein 7</fullName>
        <shortName evidence="6">MoLT-7</shortName>
    </alternativeName>
    <component>
        <recommendedName>
            <fullName>Peroxidase mlt-7 light chain</fullName>
        </recommendedName>
    </component>
    <component>
        <recommendedName>
            <fullName>Peroxidase mlt-7 heavy chain</fullName>
        </recommendedName>
    </component>
</protein>
<keyword id="KW-0106">Calcium</keyword>
<keyword id="KW-0217">Developmental protein</keyword>
<keyword id="KW-1015">Disulfide bond</keyword>
<keyword id="KW-0325">Glycoprotein</keyword>
<keyword id="KW-0349">Heme</keyword>
<keyword id="KW-0408">Iron</keyword>
<keyword id="KW-0479">Metal-binding</keyword>
<keyword id="KW-0560">Oxidoreductase</keyword>
<keyword id="KW-0575">Peroxidase</keyword>
<keyword id="KW-1185">Reference proteome</keyword>
<keyword id="KW-0732">Signal</keyword>
<reference key="1">
    <citation type="journal article" date="1998" name="Science">
        <title>Genome sequence of the nematode C. elegans: a platform for investigating biology.</title>
        <authorList>
            <consortium name="The C. elegans sequencing consortium"/>
        </authorList>
    </citation>
    <scope>NUCLEOTIDE SEQUENCE [LARGE SCALE GENOMIC DNA]</scope>
    <source>
        <strain>Bristol N2</strain>
    </source>
</reference>
<reference evidence="7" key="2">
    <citation type="journal article" date="2005" name="Glycobiology">
        <title>Identification of the hydrophobic glycoproteins of Caenorhabditis elegans.</title>
        <authorList>
            <person name="Fan X."/>
            <person name="She Y.-M."/>
            <person name="Bagshaw R.D."/>
            <person name="Callahan J.W."/>
            <person name="Schachter H."/>
            <person name="Mahuran D.J."/>
        </authorList>
    </citation>
    <scope>GLYCOSYLATION [LARGE SCALE ANALYSIS] AT ASN-509</scope>
    <scope>IDENTIFICATION BY MASS SPECTROMETRY</scope>
</reference>
<reference evidence="7" key="3">
    <citation type="journal article" date="2009" name="J. Biol. Chem.">
        <title>Combined extracellular matrix cross-linking activity of the peroxidase MLT-7 and the dual oxidase BLI-3 is critical for post-embryonic viability in Caenorhabditis elegans.</title>
        <authorList>
            <person name="Thein M.C."/>
            <person name="Winter A.D."/>
            <person name="Stepek G."/>
            <person name="McCormack G."/>
            <person name="Stapleton G."/>
            <person name="Johnstone I.L."/>
            <person name="Page A.P."/>
        </authorList>
    </citation>
    <scope>FUNCTION</scope>
    <scope>CATALYTIC ACTIVITY</scope>
    <scope>TISSUE SPECIFICITY</scope>
    <scope>DEVELOPMENTAL STAGE</scope>
    <scope>DISRUPTION PHENOTYPE</scope>
</reference>
<proteinExistence type="evidence at protein level"/>